<accession>Q9M1R1</accession>
<evidence type="ECO:0000250" key="1"/>
<evidence type="ECO:0000256" key="2">
    <source>
        <dbReference type="SAM" id="MobiDB-lite"/>
    </source>
</evidence>
<evidence type="ECO:0000269" key="3">
    <source>
    </source>
</evidence>
<evidence type="ECO:0000269" key="4">
    <source>
    </source>
</evidence>
<evidence type="ECO:0000305" key="5"/>
<reference key="1">
    <citation type="journal article" date="2000" name="Nature">
        <title>Sequence and analysis of chromosome 3 of the plant Arabidopsis thaliana.</title>
        <authorList>
            <person name="Salanoubat M."/>
            <person name="Lemcke K."/>
            <person name="Rieger M."/>
            <person name="Ansorge W."/>
            <person name="Unseld M."/>
            <person name="Fartmann B."/>
            <person name="Valle G."/>
            <person name="Bloecker H."/>
            <person name="Perez-Alonso M."/>
            <person name="Obermaier B."/>
            <person name="Delseny M."/>
            <person name="Boutry M."/>
            <person name="Grivell L.A."/>
            <person name="Mache R."/>
            <person name="Puigdomenech P."/>
            <person name="De Simone V."/>
            <person name="Choisne N."/>
            <person name="Artiguenave F."/>
            <person name="Robert C."/>
            <person name="Brottier P."/>
            <person name="Wincker P."/>
            <person name="Cattolico L."/>
            <person name="Weissenbach J."/>
            <person name="Saurin W."/>
            <person name="Quetier F."/>
            <person name="Schaefer M."/>
            <person name="Mueller-Auer S."/>
            <person name="Gabel C."/>
            <person name="Fuchs M."/>
            <person name="Benes V."/>
            <person name="Wurmbach E."/>
            <person name="Drzonek H."/>
            <person name="Erfle H."/>
            <person name="Jordan N."/>
            <person name="Bangert S."/>
            <person name="Wiedelmann R."/>
            <person name="Kranz H."/>
            <person name="Voss H."/>
            <person name="Holland R."/>
            <person name="Brandt P."/>
            <person name="Nyakatura G."/>
            <person name="Vezzi A."/>
            <person name="D'Angelo M."/>
            <person name="Pallavicini A."/>
            <person name="Toppo S."/>
            <person name="Simionati B."/>
            <person name="Conrad A."/>
            <person name="Hornischer K."/>
            <person name="Kauer G."/>
            <person name="Loehnert T.-H."/>
            <person name="Nordsiek G."/>
            <person name="Reichelt J."/>
            <person name="Scharfe M."/>
            <person name="Schoen O."/>
            <person name="Bargues M."/>
            <person name="Terol J."/>
            <person name="Climent J."/>
            <person name="Navarro P."/>
            <person name="Collado C."/>
            <person name="Perez-Perez A."/>
            <person name="Ottenwaelder B."/>
            <person name="Duchemin D."/>
            <person name="Cooke R."/>
            <person name="Laudie M."/>
            <person name="Berger-Llauro C."/>
            <person name="Purnelle B."/>
            <person name="Masuy D."/>
            <person name="de Haan M."/>
            <person name="Maarse A.C."/>
            <person name="Alcaraz J.-P."/>
            <person name="Cottet A."/>
            <person name="Casacuberta E."/>
            <person name="Monfort A."/>
            <person name="Argiriou A."/>
            <person name="Flores M."/>
            <person name="Liguori R."/>
            <person name="Vitale D."/>
            <person name="Mannhaupt G."/>
            <person name="Haase D."/>
            <person name="Schoof H."/>
            <person name="Rudd S."/>
            <person name="Zaccaria P."/>
            <person name="Mewes H.-W."/>
            <person name="Mayer K.F.X."/>
            <person name="Kaul S."/>
            <person name="Town C.D."/>
            <person name="Koo H.L."/>
            <person name="Tallon L.J."/>
            <person name="Jenkins J."/>
            <person name="Rooney T."/>
            <person name="Rizzo M."/>
            <person name="Walts A."/>
            <person name="Utterback T."/>
            <person name="Fujii C.Y."/>
            <person name="Shea T.P."/>
            <person name="Creasy T.H."/>
            <person name="Haas B."/>
            <person name="Maiti R."/>
            <person name="Wu D."/>
            <person name="Peterson J."/>
            <person name="Van Aken S."/>
            <person name="Pai G."/>
            <person name="Militscher J."/>
            <person name="Sellers P."/>
            <person name="Gill J.E."/>
            <person name="Feldblyum T.V."/>
            <person name="Preuss D."/>
            <person name="Lin X."/>
            <person name="Nierman W.C."/>
            <person name="Salzberg S.L."/>
            <person name="White O."/>
            <person name="Venter J.C."/>
            <person name="Fraser C.M."/>
            <person name="Kaneko T."/>
            <person name="Nakamura Y."/>
            <person name="Sato S."/>
            <person name="Kato T."/>
            <person name="Asamizu E."/>
            <person name="Sasamoto S."/>
            <person name="Kimura T."/>
            <person name="Idesawa K."/>
            <person name="Kawashima K."/>
            <person name="Kishida Y."/>
            <person name="Kiyokawa C."/>
            <person name="Kohara M."/>
            <person name="Matsumoto M."/>
            <person name="Matsuno A."/>
            <person name="Muraki A."/>
            <person name="Nakayama S."/>
            <person name="Nakazaki N."/>
            <person name="Shinpo S."/>
            <person name="Takeuchi C."/>
            <person name="Wada T."/>
            <person name="Watanabe A."/>
            <person name="Yamada M."/>
            <person name="Yasuda M."/>
            <person name="Tabata S."/>
        </authorList>
    </citation>
    <scope>NUCLEOTIDE SEQUENCE [LARGE SCALE GENOMIC DNA]</scope>
    <source>
        <strain>cv. Columbia</strain>
    </source>
</reference>
<reference key="2">
    <citation type="journal article" date="2017" name="Plant J.">
        <title>Araport11: a complete reannotation of the Arabidopsis thaliana reference genome.</title>
        <authorList>
            <person name="Cheng C.Y."/>
            <person name="Krishnakumar V."/>
            <person name="Chan A.P."/>
            <person name="Thibaud-Nissen F."/>
            <person name="Schobel S."/>
            <person name="Town C.D."/>
        </authorList>
    </citation>
    <scope>GENOME REANNOTATION</scope>
    <source>
        <strain>cv. Columbia</strain>
    </source>
</reference>
<reference key="3">
    <citation type="journal article" date="2003" name="Science">
        <title>Empirical analysis of transcriptional activity in the Arabidopsis genome.</title>
        <authorList>
            <person name="Yamada K."/>
            <person name="Lim J."/>
            <person name="Dale J.M."/>
            <person name="Chen H."/>
            <person name="Shinn P."/>
            <person name="Palm C.J."/>
            <person name="Southwick A.M."/>
            <person name="Wu H.C."/>
            <person name="Kim C.J."/>
            <person name="Nguyen M."/>
            <person name="Pham P.K."/>
            <person name="Cheuk R.F."/>
            <person name="Karlin-Newmann G."/>
            <person name="Liu S.X."/>
            <person name="Lam B."/>
            <person name="Sakano H."/>
            <person name="Wu T."/>
            <person name="Yu G."/>
            <person name="Miranda M."/>
            <person name="Quach H.L."/>
            <person name="Tripp M."/>
            <person name="Chang C.H."/>
            <person name="Lee J.M."/>
            <person name="Toriumi M.J."/>
            <person name="Chan M.M."/>
            <person name="Tang C.C."/>
            <person name="Onodera C.S."/>
            <person name="Deng J.M."/>
            <person name="Akiyama K."/>
            <person name="Ansari Y."/>
            <person name="Arakawa T."/>
            <person name="Banh J."/>
            <person name="Banno F."/>
            <person name="Bowser L."/>
            <person name="Brooks S.Y."/>
            <person name="Carninci P."/>
            <person name="Chao Q."/>
            <person name="Choy N."/>
            <person name="Enju A."/>
            <person name="Goldsmith A.D."/>
            <person name="Gurjal M."/>
            <person name="Hansen N.F."/>
            <person name="Hayashizaki Y."/>
            <person name="Johnson-Hopson C."/>
            <person name="Hsuan V.W."/>
            <person name="Iida K."/>
            <person name="Karnes M."/>
            <person name="Khan S."/>
            <person name="Koesema E."/>
            <person name="Ishida J."/>
            <person name="Jiang P.X."/>
            <person name="Jones T."/>
            <person name="Kawai J."/>
            <person name="Kamiya A."/>
            <person name="Meyers C."/>
            <person name="Nakajima M."/>
            <person name="Narusaka M."/>
            <person name="Seki M."/>
            <person name="Sakurai T."/>
            <person name="Satou M."/>
            <person name="Tamse R."/>
            <person name="Vaysberg M."/>
            <person name="Wallender E.K."/>
            <person name="Wong C."/>
            <person name="Yamamura Y."/>
            <person name="Yuan S."/>
            <person name="Shinozaki K."/>
            <person name="Davis R.W."/>
            <person name="Theologis A."/>
            <person name="Ecker J.R."/>
        </authorList>
    </citation>
    <scope>NUCLEOTIDE SEQUENCE [LARGE SCALE MRNA]</scope>
    <source>
        <strain>cv. Columbia</strain>
    </source>
</reference>
<reference key="4">
    <citation type="submission" date="2002-03" db="EMBL/GenBank/DDBJ databases">
        <title>Full-length cDNA from Arabidopsis thaliana.</title>
        <authorList>
            <person name="Brover V.V."/>
            <person name="Troukhan M.E."/>
            <person name="Alexandrov N.A."/>
            <person name="Lu Y.-P."/>
            <person name="Flavell R.B."/>
            <person name="Feldmann K.A."/>
        </authorList>
    </citation>
    <scope>NUCLEOTIDE SEQUENCE [LARGE SCALE MRNA]</scope>
</reference>
<reference key="5">
    <citation type="journal article" date="2011" name="Biochem. Biophys. Res. Commun.">
        <title>Hydrogen sulfide improves drought resistance in Arabidopsis thaliana.</title>
        <authorList>
            <person name="Jin Z."/>
            <person name="Shen J."/>
            <person name="Qiao Z."/>
            <person name="Yang G."/>
            <person name="Wang R."/>
            <person name="Pei Y."/>
        </authorList>
    </citation>
    <scope>FUNCTION</scope>
    <scope>TISSUE SPECIFICITY</scope>
    <scope>INDUCTION BY DROUGHT</scope>
</reference>
<reference key="6">
    <citation type="journal article" date="2013" name="Plant Physiol. Biochem.">
        <title>Hydrogen sulfide interacting with abscisic acid in stomatal regulation responses to drought stress in Arabidopsis.</title>
        <authorList>
            <person name="Jin Z."/>
            <person name="Xue S."/>
            <person name="Luo Y."/>
            <person name="Tian B."/>
            <person name="Fang H."/>
            <person name="Li H."/>
            <person name="Pei Y."/>
        </authorList>
    </citation>
    <scope>FUNCTION</scope>
    <scope>DISRUPTION PHENOTYPE</scope>
</reference>
<keyword id="KW-0456">Lyase</keyword>
<keyword id="KW-0663">Pyridoxal phosphate</keyword>
<keyword id="KW-1185">Reference proteome</keyword>
<keyword id="KW-0346">Stress response</keyword>
<dbReference type="EC" id="4.4.1.28"/>
<dbReference type="EMBL" id="AL138651">
    <property type="protein sequence ID" value="CAB71873.1"/>
    <property type="molecule type" value="Genomic_DNA"/>
</dbReference>
<dbReference type="EMBL" id="CP002686">
    <property type="protein sequence ID" value="AEE80314.1"/>
    <property type="molecule type" value="Genomic_DNA"/>
</dbReference>
<dbReference type="EMBL" id="CP002686">
    <property type="protein sequence ID" value="ANM65747.1"/>
    <property type="molecule type" value="Genomic_DNA"/>
</dbReference>
<dbReference type="EMBL" id="AY062517">
    <property type="protein sequence ID" value="AAL32595.1"/>
    <property type="molecule type" value="mRNA"/>
</dbReference>
<dbReference type="EMBL" id="BT008756">
    <property type="protein sequence ID" value="AAP49518.1"/>
    <property type="molecule type" value="mRNA"/>
</dbReference>
<dbReference type="EMBL" id="AY086807">
    <property type="protein sequence ID" value="AAM63856.1"/>
    <property type="molecule type" value="mRNA"/>
</dbReference>
<dbReference type="PIR" id="T48005">
    <property type="entry name" value="T48005"/>
</dbReference>
<dbReference type="RefSeq" id="NP_001327694.1">
    <property type="nucleotide sequence ID" value="NM_001340141.1"/>
</dbReference>
<dbReference type="RefSeq" id="NP_191772.1">
    <property type="nucleotide sequence ID" value="NM_116078.4"/>
</dbReference>
<dbReference type="SMR" id="Q9M1R1"/>
<dbReference type="FunCoup" id="Q9M1R1">
    <property type="interactions" value="1848"/>
</dbReference>
<dbReference type="STRING" id="3702.Q9M1R1"/>
<dbReference type="iPTMnet" id="Q9M1R1"/>
<dbReference type="PaxDb" id="3702-AT3G62130.1"/>
<dbReference type="ProteomicsDB" id="238412"/>
<dbReference type="EnsemblPlants" id="AT3G62130.1">
    <property type="protein sequence ID" value="AT3G62130.1"/>
    <property type="gene ID" value="AT3G62130"/>
</dbReference>
<dbReference type="EnsemblPlants" id="AT3G62130.2">
    <property type="protein sequence ID" value="AT3G62130.2"/>
    <property type="gene ID" value="AT3G62130"/>
</dbReference>
<dbReference type="GeneID" id="825386"/>
<dbReference type="Gramene" id="AT3G62130.1">
    <property type="protein sequence ID" value="AT3G62130.1"/>
    <property type="gene ID" value="AT3G62130"/>
</dbReference>
<dbReference type="Gramene" id="AT3G62130.2">
    <property type="protein sequence ID" value="AT3G62130.2"/>
    <property type="gene ID" value="AT3G62130"/>
</dbReference>
<dbReference type="KEGG" id="ath:AT3G62130"/>
<dbReference type="Araport" id="AT3G62130"/>
<dbReference type="TAIR" id="AT3G62130">
    <property type="gene designation" value="LCD"/>
</dbReference>
<dbReference type="eggNOG" id="KOG1549">
    <property type="taxonomic scope" value="Eukaryota"/>
</dbReference>
<dbReference type="HOGENOM" id="CLU_003433_3_2_1"/>
<dbReference type="InParanoid" id="Q9M1R1"/>
<dbReference type="OMA" id="VCIFDVV"/>
<dbReference type="OrthoDB" id="5978656at2759"/>
<dbReference type="PhylomeDB" id="Q9M1R1"/>
<dbReference type="BRENDA" id="4.4.1.1">
    <property type="organism ID" value="399"/>
</dbReference>
<dbReference type="PRO" id="PR:Q9M1R1"/>
<dbReference type="Proteomes" id="UP000006548">
    <property type="component" value="Chromosome 3"/>
</dbReference>
<dbReference type="ExpressionAtlas" id="Q9M1R1">
    <property type="expression patterns" value="baseline and differential"/>
</dbReference>
<dbReference type="GO" id="GO:0080146">
    <property type="term" value="F:L-cysteine desulfhydrase activity"/>
    <property type="evidence" value="ECO:0000314"/>
    <property type="project" value="TAIR"/>
</dbReference>
<dbReference type="GO" id="GO:0019450">
    <property type="term" value="P:L-cysteine catabolic process to pyruvate"/>
    <property type="evidence" value="ECO:0000314"/>
    <property type="project" value="TAIR"/>
</dbReference>
<dbReference type="FunFam" id="3.40.640.10:FF:000244">
    <property type="entry name" value="L-cysteine desulfhydrase"/>
    <property type="match status" value="1"/>
</dbReference>
<dbReference type="Gene3D" id="3.40.640.10">
    <property type="entry name" value="Type I PLP-dependent aspartate aminotransferase-like (Major domain)"/>
    <property type="match status" value="1"/>
</dbReference>
<dbReference type="InterPro" id="IPR000192">
    <property type="entry name" value="Aminotrans_V_dom"/>
</dbReference>
<dbReference type="InterPro" id="IPR015424">
    <property type="entry name" value="PyrdxlP-dep_Trfase"/>
</dbReference>
<dbReference type="InterPro" id="IPR015421">
    <property type="entry name" value="PyrdxlP-dep_Trfase_major"/>
</dbReference>
<dbReference type="PANTHER" id="PTHR43092">
    <property type="entry name" value="L-CYSTEINE DESULFHYDRASE"/>
    <property type="match status" value="1"/>
</dbReference>
<dbReference type="PANTHER" id="PTHR43092:SF7">
    <property type="entry name" value="L-CYSTEINE DESULFHYDRASE"/>
    <property type="match status" value="1"/>
</dbReference>
<dbReference type="Pfam" id="PF00266">
    <property type="entry name" value="Aminotran_5"/>
    <property type="match status" value="1"/>
</dbReference>
<dbReference type="SUPFAM" id="SSF53383">
    <property type="entry name" value="PLP-dependent transferases"/>
    <property type="match status" value="1"/>
</dbReference>
<proteinExistence type="evidence at transcript level"/>
<name>LCYD1_ARATH</name>
<sequence>MEAGERRNGDSMSHNHRAPKKPRLAGLLTESDIDSEFAHHQTGVARINNGSFGCCPGSVLEAQREWQLRYLRQPDEFYFNGLRRGLLASRTVISDLINADDVDEVSLVDNATTAAAIVLQKVGRCFSEGKYKKEDTVVMFHCAFQSVKKSIQAYVSRVGGSTVEVRLPFPVNSNEEIISKFREGLEKGRANGRTVRLAIIDHITSMPCVLMPVRELVKICREEGVEQVFVDAAHAIGSVKVDVKEIGADYYVSNLHKWFFCPPSIAFFYCKKRGSESDVHHPVVSHEFGNGLPIESAWIGTRDYSSQLVVPSVMEFVNRFEGGMEGIMMKNHDEAVRMGLMLADAWGTNLGSPPEMCVGMVMIGLPSKLCVGSDEDAIKLRSYLRVHYSVEVPVFYLGLRDGEEGVKDKDSGLITAYVRISHQVYNKTEDYERLRDAITELVKDQMTCQNLPAL</sequence>
<gene>
    <name type="primary">LCD</name>
    <name type="ordered locus">At3g62130</name>
    <name type="ORF">T17J13.90</name>
</gene>
<feature type="chain" id="PRO_0000429504" description="L-cysteine desulfhydrase">
    <location>
        <begin position="1"/>
        <end position="454"/>
    </location>
</feature>
<feature type="region of interest" description="Disordered" evidence="2">
    <location>
        <begin position="1"/>
        <end position="25"/>
    </location>
</feature>
<feature type="compositionally biased region" description="Basic residues" evidence="2">
    <location>
        <begin position="14"/>
        <end position="23"/>
    </location>
</feature>
<feature type="modified residue" description="N6-(pyridoxal phosphate)lysine" evidence="1">
    <location>
        <position position="257"/>
    </location>
</feature>
<organism>
    <name type="scientific">Arabidopsis thaliana</name>
    <name type="common">Mouse-ear cress</name>
    <dbReference type="NCBI Taxonomy" id="3702"/>
    <lineage>
        <taxon>Eukaryota</taxon>
        <taxon>Viridiplantae</taxon>
        <taxon>Streptophyta</taxon>
        <taxon>Embryophyta</taxon>
        <taxon>Tracheophyta</taxon>
        <taxon>Spermatophyta</taxon>
        <taxon>Magnoliopsida</taxon>
        <taxon>eudicotyledons</taxon>
        <taxon>Gunneridae</taxon>
        <taxon>Pentapetalae</taxon>
        <taxon>rosids</taxon>
        <taxon>malvids</taxon>
        <taxon>Brassicales</taxon>
        <taxon>Brassicaceae</taxon>
        <taxon>Camelineae</taxon>
        <taxon>Arabidopsis</taxon>
    </lineage>
</organism>
<comment type="function">
    <text evidence="3 4">Catalyzes the production of hydrogen sulfide (H2S) from cysteine. Is mainly responsible for the degradation of cysteine to generate H2S, a regulator of stomatal movement and closure.</text>
</comment>
<comment type="catalytic activity">
    <reaction>
        <text>L-cysteine + H2O = hydrogen sulfide + pyruvate + NH4(+) + H(+)</text>
        <dbReference type="Rhea" id="RHEA:24931"/>
        <dbReference type="ChEBI" id="CHEBI:15361"/>
        <dbReference type="ChEBI" id="CHEBI:15377"/>
        <dbReference type="ChEBI" id="CHEBI:15378"/>
        <dbReference type="ChEBI" id="CHEBI:28938"/>
        <dbReference type="ChEBI" id="CHEBI:29919"/>
        <dbReference type="ChEBI" id="CHEBI:35235"/>
        <dbReference type="EC" id="4.4.1.28"/>
    </reaction>
</comment>
<comment type="cofactor">
    <cofactor evidence="1">
        <name>pyridoxal 5'-phosphate</name>
        <dbReference type="ChEBI" id="CHEBI:597326"/>
    </cofactor>
</comment>
<comment type="tissue specificity">
    <text evidence="3">Highly expressed in stems and cauline leaves, and at lower levels in roots, rosette leaves and flowers.</text>
</comment>
<comment type="induction">
    <text evidence="3">By drought.</text>
</comment>
<comment type="disruption phenotype">
    <text evidence="4">No visible phenotype under normal growth conditions, but mutant plants have enlarged stomatal aperture and increased sensitivity to drought stress.</text>
</comment>
<comment type="similarity">
    <text evidence="5">Belongs to the class-V pyridoxal-phosphate-dependent aminotransferase family.</text>
</comment>
<protein>
    <recommendedName>
        <fullName>L-cysteine desulfhydrase</fullName>
        <ecNumber>4.4.1.28</ecNumber>
    </recommendedName>
    <alternativeName>
        <fullName>AtL-CDes1</fullName>
        <shortName>L-CDes1</shortName>
    </alternativeName>
    <alternativeName>
        <fullName>AtLCD</fullName>
    </alternativeName>
</protein>